<accession>Q04LH2</accession>
<feature type="chain" id="PRO_0000383907" description="Hydroxyethylthiazole kinase 2">
    <location>
        <begin position="1"/>
        <end position="267"/>
    </location>
</feature>
<feature type="binding site" evidence="1">
    <location>
        <position position="41"/>
    </location>
    <ligand>
        <name>substrate</name>
    </ligand>
</feature>
<feature type="binding site" evidence="1">
    <location>
        <position position="116"/>
    </location>
    <ligand>
        <name>ATP</name>
        <dbReference type="ChEBI" id="CHEBI:30616"/>
    </ligand>
</feature>
<feature type="binding site" evidence="1">
    <location>
        <position position="166"/>
    </location>
    <ligand>
        <name>ATP</name>
        <dbReference type="ChEBI" id="CHEBI:30616"/>
    </ligand>
</feature>
<feature type="binding site" evidence="1">
    <location>
        <position position="193"/>
    </location>
    <ligand>
        <name>substrate</name>
    </ligand>
</feature>
<gene>
    <name evidence="1" type="primary">thiM2</name>
    <name type="ordered locus">SPD_0630</name>
</gene>
<comment type="function">
    <text evidence="1">Catalyzes the phosphorylation of the hydroxyl group of 4-methyl-5-beta-hydroxyethylthiazole (THZ).</text>
</comment>
<comment type="catalytic activity">
    <reaction evidence="1">
        <text>5-(2-hydroxyethyl)-4-methylthiazole + ATP = 4-methyl-5-(2-phosphooxyethyl)-thiazole + ADP + H(+)</text>
        <dbReference type="Rhea" id="RHEA:24212"/>
        <dbReference type="ChEBI" id="CHEBI:15378"/>
        <dbReference type="ChEBI" id="CHEBI:17957"/>
        <dbReference type="ChEBI" id="CHEBI:30616"/>
        <dbReference type="ChEBI" id="CHEBI:58296"/>
        <dbReference type="ChEBI" id="CHEBI:456216"/>
        <dbReference type="EC" id="2.7.1.50"/>
    </reaction>
</comment>
<comment type="cofactor">
    <cofactor evidence="1">
        <name>Mg(2+)</name>
        <dbReference type="ChEBI" id="CHEBI:18420"/>
    </cofactor>
</comment>
<comment type="pathway">
    <text evidence="1">Cofactor biosynthesis; thiamine diphosphate biosynthesis; 4-methyl-5-(2-phosphoethyl)-thiazole from 5-(2-hydroxyethyl)-4-methylthiazole: step 1/1.</text>
</comment>
<comment type="similarity">
    <text evidence="1">Belongs to the Thz kinase family.</text>
</comment>
<reference key="1">
    <citation type="journal article" date="2007" name="J. Bacteriol.">
        <title>Genome sequence of Avery's virulent serotype 2 strain D39 of Streptococcus pneumoniae and comparison with that of unencapsulated laboratory strain R6.</title>
        <authorList>
            <person name="Lanie J.A."/>
            <person name="Ng W.-L."/>
            <person name="Kazmierczak K.M."/>
            <person name="Andrzejewski T.M."/>
            <person name="Davidsen T.M."/>
            <person name="Wayne K.J."/>
            <person name="Tettelin H."/>
            <person name="Glass J.I."/>
            <person name="Winkler M.E."/>
        </authorList>
    </citation>
    <scope>NUCLEOTIDE SEQUENCE [LARGE SCALE GENOMIC DNA]</scope>
    <source>
        <strain>D39 / NCTC 7466</strain>
    </source>
</reference>
<proteinExistence type="inferred from homology"/>
<keyword id="KW-0067">ATP-binding</keyword>
<keyword id="KW-0418">Kinase</keyword>
<keyword id="KW-0460">Magnesium</keyword>
<keyword id="KW-0479">Metal-binding</keyword>
<keyword id="KW-0547">Nucleotide-binding</keyword>
<keyword id="KW-1185">Reference proteome</keyword>
<keyword id="KW-0784">Thiamine biosynthesis</keyword>
<keyword id="KW-0808">Transferase</keyword>
<evidence type="ECO:0000255" key="1">
    <source>
        <dbReference type="HAMAP-Rule" id="MF_00228"/>
    </source>
</evidence>
<sequence>MQEFTNPFPIGSSSLIHCITNEISCEMLANGILALGCKPVMADDSREVLDFTKQSQALFINLGHLSAEKEKAIRMAASYANQSSLPMVVDAVGVTTSSIRKSLVKDLLDYRPTVLKGNMSEIRSLVGLKHHGVGVDASAKDQETEDLLQVLKDWCQTYPGMSFLVTGPKDLVVSKNQVAVLGNGCTELDWITGTGDLVGALTAVFLSQGKTGFEASCLAVSYLNIAAEKIVVQGMGLEEFRYQVLNQLSLLRRDENWLDTIKGEVYE</sequence>
<dbReference type="EC" id="2.7.1.50" evidence="1"/>
<dbReference type="EMBL" id="CP000410">
    <property type="protein sequence ID" value="ABJ53950.1"/>
    <property type="molecule type" value="Genomic_DNA"/>
</dbReference>
<dbReference type="RefSeq" id="WP_001155185.1">
    <property type="nucleotide sequence ID" value="NZ_JAMLJR010000001.1"/>
</dbReference>
<dbReference type="SMR" id="Q04LH2"/>
<dbReference type="PaxDb" id="373153-SPD_0630"/>
<dbReference type="KEGG" id="spd:SPD_0630"/>
<dbReference type="eggNOG" id="COG2145">
    <property type="taxonomic scope" value="Bacteria"/>
</dbReference>
<dbReference type="HOGENOM" id="CLU_019943_0_0_9"/>
<dbReference type="BioCyc" id="SPNE373153:G1G6V-694-MONOMER"/>
<dbReference type="UniPathway" id="UPA00060">
    <property type="reaction ID" value="UER00139"/>
</dbReference>
<dbReference type="Proteomes" id="UP000001452">
    <property type="component" value="Chromosome"/>
</dbReference>
<dbReference type="GO" id="GO:0005524">
    <property type="term" value="F:ATP binding"/>
    <property type="evidence" value="ECO:0007669"/>
    <property type="project" value="UniProtKB-UniRule"/>
</dbReference>
<dbReference type="GO" id="GO:0004417">
    <property type="term" value="F:hydroxyethylthiazole kinase activity"/>
    <property type="evidence" value="ECO:0007669"/>
    <property type="project" value="UniProtKB-UniRule"/>
</dbReference>
<dbReference type="GO" id="GO:0000287">
    <property type="term" value="F:magnesium ion binding"/>
    <property type="evidence" value="ECO:0007669"/>
    <property type="project" value="UniProtKB-UniRule"/>
</dbReference>
<dbReference type="GO" id="GO:0009228">
    <property type="term" value="P:thiamine biosynthetic process"/>
    <property type="evidence" value="ECO:0007669"/>
    <property type="project" value="UniProtKB-KW"/>
</dbReference>
<dbReference type="GO" id="GO:0009229">
    <property type="term" value="P:thiamine diphosphate biosynthetic process"/>
    <property type="evidence" value="ECO:0007669"/>
    <property type="project" value="UniProtKB-UniRule"/>
</dbReference>
<dbReference type="CDD" id="cd01170">
    <property type="entry name" value="THZ_kinase"/>
    <property type="match status" value="1"/>
</dbReference>
<dbReference type="Gene3D" id="3.40.1190.20">
    <property type="match status" value="1"/>
</dbReference>
<dbReference type="HAMAP" id="MF_00228">
    <property type="entry name" value="Thz_kinase"/>
    <property type="match status" value="1"/>
</dbReference>
<dbReference type="InterPro" id="IPR000417">
    <property type="entry name" value="Hyethyz_kinase"/>
</dbReference>
<dbReference type="InterPro" id="IPR029056">
    <property type="entry name" value="Ribokinase-like"/>
</dbReference>
<dbReference type="Pfam" id="PF02110">
    <property type="entry name" value="HK"/>
    <property type="match status" value="1"/>
</dbReference>
<dbReference type="PIRSF" id="PIRSF000513">
    <property type="entry name" value="Thz_kinase"/>
    <property type="match status" value="1"/>
</dbReference>
<dbReference type="PRINTS" id="PR01099">
    <property type="entry name" value="HYETHTZKNASE"/>
</dbReference>
<dbReference type="SUPFAM" id="SSF53613">
    <property type="entry name" value="Ribokinase-like"/>
    <property type="match status" value="1"/>
</dbReference>
<organism>
    <name type="scientific">Streptococcus pneumoniae serotype 2 (strain D39 / NCTC 7466)</name>
    <dbReference type="NCBI Taxonomy" id="373153"/>
    <lineage>
        <taxon>Bacteria</taxon>
        <taxon>Bacillati</taxon>
        <taxon>Bacillota</taxon>
        <taxon>Bacilli</taxon>
        <taxon>Lactobacillales</taxon>
        <taxon>Streptococcaceae</taxon>
        <taxon>Streptococcus</taxon>
    </lineage>
</organism>
<name>THIM2_STRP2</name>
<protein>
    <recommendedName>
        <fullName evidence="1">Hydroxyethylthiazole kinase 2</fullName>
        <ecNumber evidence="1">2.7.1.50</ecNumber>
    </recommendedName>
    <alternativeName>
        <fullName evidence="1">4-methyl-5-beta-hydroxyethylthiazole kinase 2</fullName>
        <shortName evidence="1">TH kinase 2</shortName>
        <shortName evidence="1">Thz kinase 2</shortName>
    </alternativeName>
</protein>